<gene>
    <name type="ordered locus">Exig_2520</name>
</gene>
<proteinExistence type="inferred from homology"/>
<evidence type="ECO:0000255" key="1">
    <source>
        <dbReference type="HAMAP-Rule" id="MF_01851"/>
    </source>
</evidence>
<feature type="chain" id="PRO_0000348303" description="UPF0637 protein Exig_2520">
    <location>
        <begin position="1"/>
        <end position="202"/>
    </location>
</feature>
<reference key="1">
    <citation type="submission" date="2008-04" db="EMBL/GenBank/DDBJ databases">
        <title>Complete sequence of chromosome of Exiguobacterium sibiricum 255-15.</title>
        <authorList>
            <consortium name="US DOE Joint Genome Institute"/>
            <person name="Copeland A."/>
            <person name="Lucas S."/>
            <person name="Lapidus A."/>
            <person name="Glavina del Rio T."/>
            <person name="Dalin E."/>
            <person name="Tice H."/>
            <person name="Bruce D."/>
            <person name="Goodwin L."/>
            <person name="Pitluck S."/>
            <person name="Kiss H."/>
            <person name="Chertkov O."/>
            <person name="Monk C."/>
            <person name="Brettin T."/>
            <person name="Detter J.C."/>
            <person name="Han C."/>
            <person name="Kuske C.R."/>
            <person name="Schmutz J."/>
            <person name="Larimer F."/>
            <person name="Land M."/>
            <person name="Hauser L."/>
            <person name="Kyrpides N."/>
            <person name="Mikhailova N."/>
            <person name="Vishnivetskaya T."/>
            <person name="Rodrigues D.F."/>
            <person name="Gilichinsky D."/>
            <person name="Tiedje J."/>
            <person name="Richardson P."/>
        </authorList>
    </citation>
    <scope>NUCLEOTIDE SEQUENCE [LARGE SCALE GENOMIC DNA]</scope>
    <source>
        <strain>DSM 17290 / CCUG 55495 / CIP 109462 / JCM 13490 / 255-15</strain>
    </source>
</reference>
<sequence>MTTHFTKEAFDTFEIEGLEQRMDAIRERIQPVFKQIGQEVSPDLTVNLAEDMYVHIAQHARRKVNPPKDTWMAFSPNKRGYKKHPHFQVGLFDDHLFIWLAYIYELPNKSQYATKLLNHQELLHALPSDFVVSYDHMKKEAQQIDETGLEQGLVRFRDVKKAEFLVGRHVSAEEVSAMSHEDLVKLIRNTYEQLVPIYKKIQ</sequence>
<accession>B1YM12</accession>
<keyword id="KW-1185">Reference proteome</keyword>
<organism>
    <name type="scientific">Exiguobacterium sibiricum (strain DSM 17290 / CCUG 55495 / CIP 109462 / JCM 13490 / 255-15)</name>
    <dbReference type="NCBI Taxonomy" id="262543"/>
    <lineage>
        <taxon>Bacteria</taxon>
        <taxon>Bacillati</taxon>
        <taxon>Bacillota</taxon>
        <taxon>Bacilli</taxon>
        <taxon>Bacillales</taxon>
        <taxon>Bacillales Family XII. Incertae Sedis</taxon>
        <taxon>Exiguobacterium</taxon>
    </lineage>
</organism>
<comment type="similarity">
    <text evidence="1">Belongs to the UPF0637 family.</text>
</comment>
<name>Y2520_EXIS2</name>
<protein>
    <recommendedName>
        <fullName evidence="1">UPF0637 protein Exig_2520</fullName>
    </recommendedName>
</protein>
<dbReference type="EMBL" id="CP001022">
    <property type="protein sequence ID" value="ACB61970.1"/>
    <property type="molecule type" value="Genomic_DNA"/>
</dbReference>
<dbReference type="RefSeq" id="WP_012371386.1">
    <property type="nucleotide sequence ID" value="NC_010556.1"/>
</dbReference>
<dbReference type="SMR" id="B1YM12"/>
<dbReference type="STRING" id="262543.Exig_2520"/>
<dbReference type="KEGG" id="esi:Exig_2520"/>
<dbReference type="eggNOG" id="COG4493">
    <property type="taxonomic scope" value="Bacteria"/>
</dbReference>
<dbReference type="HOGENOM" id="CLU_096059_0_0_9"/>
<dbReference type="OrthoDB" id="9812818at2"/>
<dbReference type="Proteomes" id="UP000001681">
    <property type="component" value="Chromosome"/>
</dbReference>
<dbReference type="Gene3D" id="3.30.930.20">
    <property type="entry name" value="Protein of unknown function DUF1054"/>
    <property type="match status" value="1"/>
</dbReference>
<dbReference type="HAMAP" id="MF_01851">
    <property type="entry name" value="UPF0637"/>
    <property type="match status" value="1"/>
</dbReference>
<dbReference type="InterPro" id="IPR009403">
    <property type="entry name" value="UPF0637"/>
</dbReference>
<dbReference type="InterPro" id="IPR053707">
    <property type="entry name" value="UPF0637_domain_sf"/>
</dbReference>
<dbReference type="Pfam" id="PF06335">
    <property type="entry name" value="DUF1054"/>
    <property type="match status" value="1"/>
</dbReference>
<dbReference type="PIRSF" id="PIRSF021332">
    <property type="entry name" value="DUF1054"/>
    <property type="match status" value="1"/>
</dbReference>
<dbReference type="SUPFAM" id="SSF142913">
    <property type="entry name" value="YktB/PF0168-like"/>
    <property type="match status" value="1"/>
</dbReference>